<gene>
    <name evidence="1" type="primary">rplO</name>
    <name type="ordered locus">Desal_1204</name>
</gene>
<sequence>MRLHEIYPFQEERKNRKRVGRGGGSGWGGTSGKGHKGQNARSGGGVPAWFEGGQMPLARRLPKRGFKNPFREEYVALNVGQILGAFEGRTEISLEDIYERGLCKKGALVKVLGMGEVSAAVTIEAHRFSASATEKITKAGGTAKALEG</sequence>
<comment type="function">
    <text evidence="1">Binds to the 23S rRNA.</text>
</comment>
<comment type="subunit">
    <text evidence="1">Part of the 50S ribosomal subunit.</text>
</comment>
<comment type="similarity">
    <text evidence="1">Belongs to the universal ribosomal protein uL15 family.</text>
</comment>
<evidence type="ECO:0000255" key="1">
    <source>
        <dbReference type="HAMAP-Rule" id="MF_01341"/>
    </source>
</evidence>
<evidence type="ECO:0000256" key="2">
    <source>
        <dbReference type="SAM" id="MobiDB-lite"/>
    </source>
</evidence>
<evidence type="ECO:0000305" key="3"/>
<protein>
    <recommendedName>
        <fullName evidence="1">Large ribosomal subunit protein uL15</fullName>
    </recommendedName>
    <alternativeName>
        <fullName evidence="3">50S ribosomal protein L15</fullName>
    </alternativeName>
</protein>
<feature type="chain" id="PRO_1000214699" description="Large ribosomal subunit protein uL15">
    <location>
        <begin position="1"/>
        <end position="148"/>
    </location>
</feature>
<feature type="region of interest" description="Disordered" evidence="2">
    <location>
        <begin position="12"/>
        <end position="52"/>
    </location>
</feature>
<feature type="compositionally biased region" description="Gly residues" evidence="2">
    <location>
        <begin position="21"/>
        <end position="32"/>
    </location>
</feature>
<organism>
    <name type="scientific">Maridesulfovibrio salexigens (strain ATCC 14822 / DSM 2638 / NCIMB 8403 / VKM B-1763)</name>
    <name type="common">Desulfovibrio salexigens</name>
    <dbReference type="NCBI Taxonomy" id="526222"/>
    <lineage>
        <taxon>Bacteria</taxon>
        <taxon>Pseudomonadati</taxon>
        <taxon>Thermodesulfobacteriota</taxon>
        <taxon>Desulfovibrionia</taxon>
        <taxon>Desulfovibrionales</taxon>
        <taxon>Desulfovibrionaceae</taxon>
        <taxon>Maridesulfovibrio</taxon>
    </lineage>
</organism>
<accession>C6C1A4</accession>
<dbReference type="EMBL" id="CP001649">
    <property type="protein sequence ID" value="ACS79267.1"/>
    <property type="molecule type" value="Genomic_DNA"/>
</dbReference>
<dbReference type="RefSeq" id="WP_015851085.1">
    <property type="nucleotide sequence ID" value="NC_012881.1"/>
</dbReference>
<dbReference type="SMR" id="C6C1A4"/>
<dbReference type="STRING" id="526222.Desal_1204"/>
<dbReference type="KEGG" id="dsa:Desal_1204"/>
<dbReference type="eggNOG" id="COG0200">
    <property type="taxonomic scope" value="Bacteria"/>
</dbReference>
<dbReference type="HOGENOM" id="CLU_055188_4_2_7"/>
<dbReference type="OrthoDB" id="9810293at2"/>
<dbReference type="Proteomes" id="UP000002601">
    <property type="component" value="Chromosome"/>
</dbReference>
<dbReference type="GO" id="GO:0022625">
    <property type="term" value="C:cytosolic large ribosomal subunit"/>
    <property type="evidence" value="ECO:0007669"/>
    <property type="project" value="TreeGrafter"/>
</dbReference>
<dbReference type="GO" id="GO:0019843">
    <property type="term" value="F:rRNA binding"/>
    <property type="evidence" value="ECO:0007669"/>
    <property type="project" value="UniProtKB-UniRule"/>
</dbReference>
<dbReference type="GO" id="GO:0003735">
    <property type="term" value="F:structural constituent of ribosome"/>
    <property type="evidence" value="ECO:0007669"/>
    <property type="project" value="InterPro"/>
</dbReference>
<dbReference type="GO" id="GO:0006412">
    <property type="term" value="P:translation"/>
    <property type="evidence" value="ECO:0007669"/>
    <property type="project" value="UniProtKB-UniRule"/>
</dbReference>
<dbReference type="Gene3D" id="3.100.10.10">
    <property type="match status" value="1"/>
</dbReference>
<dbReference type="HAMAP" id="MF_01341">
    <property type="entry name" value="Ribosomal_uL15"/>
    <property type="match status" value="1"/>
</dbReference>
<dbReference type="InterPro" id="IPR030878">
    <property type="entry name" value="Ribosomal_uL15"/>
</dbReference>
<dbReference type="InterPro" id="IPR021131">
    <property type="entry name" value="Ribosomal_uL15/eL18"/>
</dbReference>
<dbReference type="InterPro" id="IPR036227">
    <property type="entry name" value="Ribosomal_uL15/eL18_sf"/>
</dbReference>
<dbReference type="InterPro" id="IPR005749">
    <property type="entry name" value="Ribosomal_uL15_bac-type"/>
</dbReference>
<dbReference type="InterPro" id="IPR001196">
    <property type="entry name" value="Ribosomal_uL15_CS"/>
</dbReference>
<dbReference type="NCBIfam" id="TIGR01071">
    <property type="entry name" value="rplO_bact"/>
    <property type="match status" value="1"/>
</dbReference>
<dbReference type="PANTHER" id="PTHR12934">
    <property type="entry name" value="50S RIBOSOMAL PROTEIN L15"/>
    <property type="match status" value="1"/>
</dbReference>
<dbReference type="PANTHER" id="PTHR12934:SF11">
    <property type="entry name" value="LARGE RIBOSOMAL SUBUNIT PROTEIN UL15M"/>
    <property type="match status" value="1"/>
</dbReference>
<dbReference type="Pfam" id="PF00828">
    <property type="entry name" value="Ribosomal_L27A"/>
    <property type="match status" value="1"/>
</dbReference>
<dbReference type="SUPFAM" id="SSF52080">
    <property type="entry name" value="Ribosomal proteins L15p and L18e"/>
    <property type="match status" value="1"/>
</dbReference>
<dbReference type="PROSITE" id="PS00475">
    <property type="entry name" value="RIBOSOMAL_L15"/>
    <property type="match status" value="1"/>
</dbReference>
<name>RL15_MARSD</name>
<keyword id="KW-1185">Reference proteome</keyword>
<keyword id="KW-0687">Ribonucleoprotein</keyword>
<keyword id="KW-0689">Ribosomal protein</keyword>
<keyword id="KW-0694">RNA-binding</keyword>
<keyword id="KW-0699">rRNA-binding</keyword>
<proteinExistence type="inferred from homology"/>
<reference key="1">
    <citation type="submission" date="2009-06" db="EMBL/GenBank/DDBJ databases">
        <title>Complete sequence of Desulfovibrio salexigens DSM 2638.</title>
        <authorList>
            <consortium name="US DOE Joint Genome Institute"/>
            <person name="Lucas S."/>
            <person name="Copeland A."/>
            <person name="Lapidus A."/>
            <person name="Glavina del Rio T."/>
            <person name="Tice H."/>
            <person name="Bruce D."/>
            <person name="Goodwin L."/>
            <person name="Pitluck S."/>
            <person name="Munk A.C."/>
            <person name="Brettin T."/>
            <person name="Detter J.C."/>
            <person name="Han C."/>
            <person name="Tapia R."/>
            <person name="Larimer F."/>
            <person name="Land M."/>
            <person name="Hauser L."/>
            <person name="Kyrpides N."/>
            <person name="Anderson I."/>
            <person name="Wall J.D."/>
            <person name="Arkin A.P."/>
            <person name="Dehal P."/>
            <person name="Chivian D."/>
            <person name="Giles B."/>
            <person name="Hazen T.C."/>
        </authorList>
    </citation>
    <scope>NUCLEOTIDE SEQUENCE [LARGE SCALE GENOMIC DNA]</scope>
    <source>
        <strain>ATCC 14822 / DSM 2638 / NCIMB 8403 / VKM B-1763</strain>
    </source>
</reference>